<organism>
    <name type="scientific">Bacillus cereus (strain ATCC 14579 / DSM 31 / CCUG 7414 / JCM 2152 / NBRC 15305 / NCIMB 9373 / NCTC 2599 / NRRL B-3711)</name>
    <dbReference type="NCBI Taxonomy" id="226900"/>
    <lineage>
        <taxon>Bacteria</taxon>
        <taxon>Bacillati</taxon>
        <taxon>Bacillota</taxon>
        <taxon>Bacilli</taxon>
        <taxon>Bacillales</taxon>
        <taxon>Bacillaceae</taxon>
        <taxon>Bacillus</taxon>
        <taxon>Bacillus cereus group</taxon>
    </lineage>
</organism>
<feature type="chain" id="PRO_0000299326" description="Putative phosphoesterase BC_1225">
    <location>
        <begin position="1"/>
        <end position="172"/>
    </location>
</feature>
<feature type="short sequence motif" description="HXTX 1" evidence="1">
    <location>
        <begin position="34"/>
        <end position="37"/>
    </location>
</feature>
<feature type="short sequence motif" description="HXTX 2" evidence="1">
    <location>
        <begin position="115"/>
        <end position="118"/>
    </location>
</feature>
<feature type="active site" description="Proton donor" evidence="1">
    <location>
        <position position="34"/>
    </location>
</feature>
<feature type="active site" description="Proton acceptor" evidence="1">
    <location>
        <position position="115"/>
    </location>
</feature>
<comment type="similarity">
    <text evidence="1">Belongs to the 2H phosphoesterase superfamily. YjcG family.</text>
</comment>
<name>Y1225_BACCR</name>
<evidence type="ECO:0000255" key="1">
    <source>
        <dbReference type="HAMAP-Rule" id="MF_01444"/>
    </source>
</evidence>
<reference key="1">
    <citation type="journal article" date="2003" name="Nature">
        <title>Genome sequence of Bacillus cereus and comparative analysis with Bacillus anthracis.</title>
        <authorList>
            <person name="Ivanova N."/>
            <person name="Sorokin A."/>
            <person name="Anderson I."/>
            <person name="Galleron N."/>
            <person name="Candelon B."/>
            <person name="Kapatral V."/>
            <person name="Bhattacharyya A."/>
            <person name="Reznik G."/>
            <person name="Mikhailova N."/>
            <person name="Lapidus A."/>
            <person name="Chu L."/>
            <person name="Mazur M."/>
            <person name="Goltsman E."/>
            <person name="Larsen N."/>
            <person name="D'Souza M."/>
            <person name="Walunas T."/>
            <person name="Grechkin Y."/>
            <person name="Pusch G."/>
            <person name="Haselkorn R."/>
            <person name="Fonstein M."/>
            <person name="Ehrlich S.D."/>
            <person name="Overbeek R."/>
            <person name="Kyrpides N.C."/>
        </authorList>
    </citation>
    <scope>NUCLEOTIDE SEQUENCE [LARGE SCALE GENOMIC DNA]</scope>
    <source>
        <strain>ATCC 14579 / DSM 31 / CCUG 7414 / JCM 2152 / NBRC 15305 / NCIMB 9373 / NCTC 2599 / NRRL B-3711</strain>
    </source>
</reference>
<protein>
    <recommendedName>
        <fullName evidence="1">Putative phosphoesterase BC_1225</fullName>
        <ecNumber evidence="1">3.1.-.-</ecNumber>
    </recommendedName>
</protein>
<proteinExistence type="inferred from homology"/>
<keyword id="KW-0378">Hydrolase</keyword>
<keyword id="KW-1185">Reference proteome</keyword>
<sequence>MKLGIVIFPSKMIQDKANGLRKRYDPHYALVPPHITLKTPFEAQDEQLESIVNELHTIASKTNPFTLHVGKVGSFAPVNNVLYFKVEKTPELTFLNEEMHSGLFTQEREYAFVPHLTIGQGLSDAEHADVLGRLRMKDFYYEQPIDRFHLLYQLENGTWTVHETFRLGKGNN</sequence>
<gene>
    <name type="ordered locus">BC_1225</name>
</gene>
<accession>Q81GH5</accession>
<dbReference type="EC" id="3.1.-.-" evidence="1"/>
<dbReference type="EMBL" id="AE016877">
    <property type="protein sequence ID" value="AAP08210.1"/>
    <property type="molecule type" value="Genomic_DNA"/>
</dbReference>
<dbReference type="RefSeq" id="NP_831009.1">
    <property type="nucleotide sequence ID" value="NC_004722.1"/>
</dbReference>
<dbReference type="RefSeq" id="WP_000765863.1">
    <property type="nucleotide sequence ID" value="NZ_CP138336.1"/>
</dbReference>
<dbReference type="SMR" id="Q81GH5"/>
<dbReference type="STRING" id="226900.BC_1225"/>
<dbReference type="MetOSite" id="Q81GH5"/>
<dbReference type="KEGG" id="bce:BC1225"/>
<dbReference type="PATRIC" id="fig|226900.8.peg.1195"/>
<dbReference type="HOGENOM" id="CLU_132020_0_0_9"/>
<dbReference type="OrthoDB" id="1524661at2"/>
<dbReference type="Proteomes" id="UP000001417">
    <property type="component" value="Chromosome"/>
</dbReference>
<dbReference type="GO" id="GO:0016788">
    <property type="term" value="F:hydrolase activity, acting on ester bonds"/>
    <property type="evidence" value="ECO:0007669"/>
    <property type="project" value="UniProtKB-UniRule"/>
</dbReference>
<dbReference type="Gene3D" id="3.90.1140.10">
    <property type="entry name" value="Cyclic phosphodiesterase"/>
    <property type="match status" value="1"/>
</dbReference>
<dbReference type="HAMAP" id="MF_01444">
    <property type="entry name" value="2H_phosphoesterase_YjcG"/>
    <property type="match status" value="1"/>
</dbReference>
<dbReference type="InterPro" id="IPR050580">
    <property type="entry name" value="2H_phosphoesterase_YjcG-like"/>
</dbReference>
<dbReference type="InterPro" id="IPR009097">
    <property type="entry name" value="Cyclic_Pdiesterase"/>
</dbReference>
<dbReference type="InterPro" id="IPR022932">
    <property type="entry name" value="YjcG"/>
</dbReference>
<dbReference type="NCBIfam" id="NF010223">
    <property type="entry name" value="PRK13679.1"/>
    <property type="match status" value="1"/>
</dbReference>
<dbReference type="PANTHER" id="PTHR40037:SF1">
    <property type="entry name" value="PHOSPHOESTERASE SAOUHSC_00951-RELATED"/>
    <property type="match status" value="1"/>
</dbReference>
<dbReference type="PANTHER" id="PTHR40037">
    <property type="entry name" value="PHOSPHOESTERASE YJCG-RELATED"/>
    <property type="match status" value="1"/>
</dbReference>
<dbReference type="Pfam" id="PF13563">
    <property type="entry name" value="2_5_RNA_ligase2"/>
    <property type="match status" value="1"/>
</dbReference>
<dbReference type="SUPFAM" id="SSF55144">
    <property type="entry name" value="LigT-like"/>
    <property type="match status" value="1"/>
</dbReference>